<evidence type="ECO:0000255" key="1">
    <source>
        <dbReference type="HAMAP-Rule" id="MF_00686"/>
    </source>
</evidence>
<dbReference type="EMBL" id="CP001138">
    <property type="protein sequence ID" value="ACH52614.1"/>
    <property type="molecule type" value="Genomic_DNA"/>
</dbReference>
<dbReference type="RefSeq" id="WP_000091706.1">
    <property type="nucleotide sequence ID" value="NC_011149.1"/>
</dbReference>
<dbReference type="SMR" id="B5F5N7"/>
<dbReference type="KEGG" id="sea:SeAg_B3275"/>
<dbReference type="HOGENOM" id="CLU_170994_0_0_6"/>
<dbReference type="Proteomes" id="UP000008819">
    <property type="component" value="Chromosome"/>
</dbReference>
<dbReference type="GO" id="GO:0005829">
    <property type="term" value="C:cytosol"/>
    <property type="evidence" value="ECO:0007669"/>
    <property type="project" value="TreeGrafter"/>
</dbReference>
<dbReference type="GO" id="GO:0005506">
    <property type="term" value="F:iron ion binding"/>
    <property type="evidence" value="ECO:0007669"/>
    <property type="project" value="UniProtKB-UniRule"/>
</dbReference>
<dbReference type="GO" id="GO:0034599">
    <property type="term" value="P:cellular response to oxidative stress"/>
    <property type="evidence" value="ECO:0007669"/>
    <property type="project" value="TreeGrafter"/>
</dbReference>
<dbReference type="FunFam" id="1.10.3880.10:FF:000001">
    <property type="entry name" value="Probable Fe(2+)-trafficking protein"/>
    <property type="match status" value="1"/>
</dbReference>
<dbReference type="Gene3D" id="1.10.3880.10">
    <property type="entry name" value="Fe(II) trafficking protein YggX"/>
    <property type="match status" value="1"/>
</dbReference>
<dbReference type="HAMAP" id="MF_00686">
    <property type="entry name" value="Fe_traffic_YggX"/>
    <property type="match status" value="1"/>
</dbReference>
<dbReference type="InterPro" id="IPR007457">
    <property type="entry name" value="Fe_traffick_prot_YggX"/>
</dbReference>
<dbReference type="InterPro" id="IPR036766">
    <property type="entry name" value="Fe_traffick_prot_YggX_sf"/>
</dbReference>
<dbReference type="NCBIfam" id="NF003817">
    <property type="entry name" value="PRK05408.1"/>
    <property type="match status" value="1"/>
</dbReference>
<dbReference type="PANTHER" id="PTHR36965">
    <property type="entry name" value="FE(2+)-TRAFFICKING PROTEIN-RELATED"/>
    <property type="match status" value="1"/>
</dbReference>
<dbReference type="PANTHER" id="PTHR36965:SF1">
    <property type="entry name" value="FE(2+)-TRAFFICKING PROTEIN-RELATED"/>
    <property type="match status" value="1"/>
</dbReference>
<dbReference type="Pfam" id="PF04362">
    <property type="entry name" value="Iron_traffic"/>
    <property type="match status" value="1"/>
</dbReference>
<dbReference type="PIRSF" id="PIRSF029827">
    <property type="entry name" value="Fe_traffic_YggX"/>
    <property type="match status" value="1"/>
</dbReference>
<dbReference type="SUPFAM" id="SSF111148">
    <property type="entry name" value="YggX-like"/>
    <property type="match status" value="1"/>
</dbReference>
<comment type="function">
    <text evidence="1">Could be a mediator in iron transactions between iron acquisition and iron-requiring processes, such as synthesis and/or repair of Fe-S clusters in biosynthetic enzymes.</text>
</comment>
<comment type="subunit">
    <text evidence="1">Monomer.</text>
</comment>
<comment type="similarity">
    <text evidence="1">Belongs to the Fe(2+)-trafficking protein family.</text>
</comment>
<feature type="chain" id="PRO_1000131857" description="Probable Fe(2+)-trafficking protein">
    <location>
        <begin position="1"/>
        <end position="91"/>
    </location>
</feature>
<name>FETP_SALA4</name>
<proteinExistence type="inferred from homology"/>
<reference key="1">
    <citation type="journal article" date="2011" name="J. Bacteriol.">
        <title>Comparative genomics of 28 Salmonella enterica isolates: evidence for CRISPR-mediated adaptive sublineage evolution.</title>
        <authorList>
            <person name="Fricke W.F."/>
            <person name="Mammel M.K."/>
            <person name="McDermott P.F."/>
            <person name="Tartera C."/>
            <person name="White D.G."/>
            <person name="Leclerc J.E."/>
            <person name="Ravel J."/>
            <person name="Cebula T.A."/>
        </authorList>
    </citation>
    <scope>NUCLEOTIDE SEQUENCE [LARGE SCALE GENOMIC DNA]</scope>
    <source>
        <strain>SL483</strain>
    </source>
</reference>
<sequence>MSRTIFCTYLQRDAEGQDFQLYPGELGKRIYNEISKDAWAQWQHKQTMLINEKKLNMMNAEHRKLLEQEMVSFLFEGKDVHIEGYTPEDKK</sequence>
<protein>
    <recommendedName>
        <fullName evidence="1">Probable Fe(2+)-trafficking protein</fullName>
    </recommendedName>
</protein>
<gene>
    <name evidence="1" type="primary">yggX</name>
    <name type="ordered locus">SeAg_B3275</name>
</gene>
<organism>
    <name type="scientific">Salmonella agona (strain SL483)</name>
    <dbReference type="NCBI Taxonomy" id="454166"/>
    <lineage>
        <taxon>Bacteria</taxon>
        <taxon>Pseudomonadati</taxon>
        <taxon>Pseudomonadota</taxon>
        <taxon>Gammaproteobacteria</taxon>
        <taxon>Enterobacterales</taxon>
        <taxon>Enterobacteriaceae</taxon>
        <taxon>Salmonella</taxon>
    </lineage>
</organism>
<keyword id="KW-0408">Iron</keyword>
<accession>B5F5N7</accession>